<accession>P00227</accession>
<proteinExistence type="evidence at protein level"/>
<keyword id="KW-0001">2Fe-2S</keyword>
<keyword id="KW-0150">Chloroplast</keyword>
<keyword id="KW-0903">Direct protein sequencing</keyword>
<keyword id="KW-0249">Electron transport</keyword>
<keyword id="KW-0408">Iron</keyword>
<keyword id="KW-0411">Iron-sulfur</keyword>
<keyword id="KW-0479">Metal-binding</keyword>
<keyword id="KW-0934">Plastid</keyword>
<keyword id="KW-0813">Transport</keyword>
<protein>
    <recommendedName>
        <fullName>Ferredoxin</fullName>
    </recommendedName>
</protein>
<sequence>ATYKVKFITPEGEQEVECDDDVYVLDAAEEAGIDLPYSCRAGSCSSCAGKVVSGFVDQSDESFLDDDQIAEGFVLTCAAYPTSDVTIETHKEEELV</sequence>
<evidence type="ECO:0000255" key="1">
    <source>
        <dbReference type="PROSITE-ProRule" id="PRU00465"/>
    </source>
</evidence>
<evidence type="ECO:0000305" key="2"/>
<reference key="1">
    <citation type="journal article" date="1980" name="Biochem. J.">
        <title>The amino acid sequence of ferredoxin from Brassica napus (rape).</title>
        <authorList>
            <person name="Takruri I.A.H."/>
            <person name="Boulter D."/>
        </authorList>
    </citation>
    <scope>PROTEIN SEQUENCE</scope>
</reference>
<dbReference type="PIR" id="A00234">
    <property type="entry name" value="FERP"/>
</dbReference>
<dbReference type="SMR" id="P00227"/>
<dbReference type="GO" id="GO:0009507">
    <property type="term" value="C:chloroplast"/>
    <property type="evidence" value="ECO:0007669"/>
    <property type="project" value="UniProtKB-SubCell"/>
</dbReference>
<dbReference type="GO" id="GO:0051537">
    <property type="term" value="F:2 iron, 2 sulfur cluster binding"/>
    <property type="evidence" value="ECO:0007669"/>
    <property type="project" value="UniProtKB-KW"/>
</dbReference>
<dbReference type="GO" id="GO:0009055">
    <property type="term" value="F:electron transfer activity"/>
    <property type="evidence" value="ECO:0007669"/>
    <property type="project" value="InterPro"/>
</dbReference>
<dbReference type="GO" id="GO:0046872">
    <property type="term" value="F:metal ion binding"/>
    <property type="evidence" value="ECO:0007669"/>
    <property type="project" value="UniProtKB-KW"/>
</dbReference>
<dbReference type="GO" id="GO:0022900">
    <property type="term" value="P:electron transport chain"/>
    <property type="evidence" value="ECO:0007669"/>
    <property type="project" value="InterPro"/>
</dbReference>
<dbReference type="CDD" id="cd00207">
    <property type="entry name" value="fer2"/>
    <property type="match status" value="1"/>
</dbReference>
<dbReference type="FunFam" id="3.10.20.30:FF:000014">
    <property type="entry name" value="Ferredoxin"/>
    <property type="match status" value="1"/>
</dbReference>
<dbReference type="Gene3D" id="3.10.20.30">
    <property type="match status" value="1"/>
</dbReference>
<dbReference type="InterPro" id="IPR036010">
    <property type="entry name" value="2Fe-2S_ferredoxin-like_sf"/>
</dbReference>
<dbReference type="InterPro" id="IPR001041">
    <property type="entry name" value="2Fe-2S_ferredoxin-type"/>
</dbReference>
<dbReference type="InterPro" id="IPR006058">
    <property type="entry name" value="2Fe2S_fd_BS"/>
</dbReference>
<dbReference type="InterPro" id="IPR012675">
    <property type="entry name" value="Beta-grasp_dom_sf"/>
</dbReference>
<dbReference type="InterPro" id="IPR010241">
    <property type="entry name" value="Fd_pln"/>
</dbReference>
<dbReference type="NCBIfam" id="TIGR02008">
    <property type="entry name" value="fdx_plant"/>
    <property type="match status" value="1"/>
</dbReference>
<dbReference type="PANTHER" id="PTHR43112">
    <property type="entry name" value="FERREDOXIN"/>
    <property type="match status" value="1"/>
</dbReference>
<dbReference type="PANTHER" id="PTHR43112:SF3">
    <property type="entry name" value="FERREDOXIN-2, CHLOROPLASTIC"/>
    <property type="match status" value="1"/>
</dbReference>
<dbReference type="Pfam" id="PF00111">
    <property type="entry name" value="Fer2"/>
    <property type="match status" value="1"/>
</dbReference>
<dbReference type="SUPFAM" id="SSF54292">
    <property type="entry name" value="2Fe-2S ferredoxin-like"/>
    <property type="match status" value="1"/>
</dbReference>
<dbReference type="PROSITE" id="PS00197">
    <property type="entry name" value="2FE2S_FER_1"/>
    <property type="match status" value="1"/>
</dbReference>
<dbReference type="PROSITE" id="PS51085">
    <property type="entry name" value="2FE2S_FER_2"/>
    <property type="match status" value="1"/>
</dbReference>
<name>FER_BRANA</name>
<comment type="function">
    <text>Ferredoxins are iron-sulfur proteins that transfer electrons in a wide variety of metabolic reactions.</text>
</comment>
<comment type="cofactor">
    <cofactor>
        <name>[2Fe-2S] cluster</name>
        <dbReference type="ChEBI" id="CHEBI:190135"/>
    </cofactor>
    <text>Binds 1 [2Fe-2S] cluster.</text>
</comment>
<comment type="subcellular location">
    <subcellularLocation>
        <location>Plastid</location>
        <location>Chloroplast</location>
    </subcellularLocation>
</comment>
<comment type="similarity">
    <text evidence="2">Belongs to the 2Fe2S plant-type ferredoxin family.</text>
</comment>
<organism>
    <name type="scientific">Brassica napus</name>
    <name type="common">Rape</name>
    <dbReference type="NCBI Taxonomy" id="3708"/>
    <lineage>
        <taxon>Eukaryota</taxon>
        <taxon>Viridiplantae</taxon>
        <taxon>Streptophyta</taxon>
        <taxon>Embryophyta</taxon>
        <taxon>Tracheophyta</taxon>
        <taxon>Spermatophyta</taxon>
        <taxon>Magnoliopsida</taxon>
        <taxon>eudicotyledons</taxon>
        <taxon>Gunneridae</taxon>
        <taxon>Pentapetalae</taxon>
        <taxon>rosids</taxon>
        <taxon>malvids</taxon>
        <taxon>Brassicales</taxon>
        <taxon>Brassicaceae</taxon>
        <taxon>Brassiceae</taxon>
        <taxon>Brassica</taxon>
    </lineage>
</organism>
<feature type="chain" id="PRO_0000189309" description="Ferredoxin">
    <location>
        <begin position="1"/>
        <end position="96"/>
    </location>
</feature>
<feature type="domain" description="2Fe-2S ferredoxin-type" evidence="1">
    <location>
        <begin position="3"/>
        <end position="93"/>
    </location>
</feature>
<feature type="binding site" evidence="1">
    <location>
        <position position="39"/>
    </location>
    <ligand>
        <name>[2Fe-2S] cluster</name>
        <dbReference type="ChEBI" id="CHEBI:190135"/>
    </ligand>
</feature>
<feature type="binding site" evidence="1">
    <location>
        <position position="44"/>
    </location>
    <ligand>
        <name>[2Fe-2S] cluster</name>
        <dbReference type="ChEBI" id="CHEBI:190135"/>
    </ligand>
</feature>
<feature type="binding site" evidence="1">
    <location>
        <position position="47"/>
    </location>
    <ligand>
        <name>[2Fe-2S] cluster</name>
        <dbReference type="ChEBI" id="CHEBI:190135"/>
    </ligand>
</feature>
<feature type="binding site" evidence="1">
    <location>
        <position position="77"/>
    </location>
    <ligand>
        <name>[2Fe-2S] cluster</name>
        <dbReference type="ChEBI" id="CHEBI:190135"/>
    </ligand>
</feature>